<gene>
    <name evidence="4" type="primary">dctQ</name>
</gene>
<protein>
    <recommendedName>
        <fullName evidence="5">C4-dicarboxylate TRAP transporter small permease protein DctQ</fullName>
    </recommendedName>
</protein>
<comment type="function">
    <text evidence="3">Part of the tripartite ATP-independent periplasmic (TRAP) transport system DctPQM involved in C4-dicarboxylates uptake.</text>
</comment>
<comment type="subunit">
    <text evidence="3">The complex comprises the extracytoplasmic solute receptor protein DctP, and the two transmembrane proteins DctQ and DctM.</text>
</comment>
<comment type="subcellular location">
    <subcellularLocation>
        <location evidence="2 3">Cell inner membrane</location>
        <topology evidence="1">Multi-pass membrane protein</topology>
    </subcellularLocation>
</comment>
<comment type="disruption phenotype">
    <text evidence="3">Deletion mutant is unable to transport succinate, and does not grow on D-malate, L-malate, succinate or fumarate as the sole carbon source under aerobic conditions in the dark.</text>
</comment>
<comment type="similarity">
    <text evidence="5">Belongs to the TRAP transporter small permease family.</text>
</comment>
<keyword id="KW-0997">Cell inner membrane</keyword>
<keyword id="KW-1003">Cell membrane</keyword>
<keyword id="KW-0472">Membrane</keyword>
<keyword id="KW-0812">Transmembrane</keyword>
<keyword id="KW-1133">Transmembrane helix</keyword>
<keyword id="KW-0813">Transport</keyword>
<feature type="chain" id="PRO_0000435382" description="C4-dicarboxylate TRAP transporter small permease protein DctQ">
    <location>
        <begin position="1"/>
        <end position="227"/>
    </location>
</feature>
<feature type="topological domain" description="Cytoplasmic" evidence="6">
    <location>
        <begin position="1"/>
        <end position="7"/>
    </location>
</feature>
<feature type="transmembrane region" description="Helical" evidence="1">
    <location>
        <begin position="8"/>
        <end position="28"/>
    </location>
</feature>
<feature type="topological domain" description="Periplasmic" evidence="6">
    <location>
        <begin position="29"/>
        <end position="67"/>
    </location>
</feature>
<feature type="transmembrane region" description="Helical" evidence="1">
    <location>
        <begin position="68"/>
        <end position="88"/>
    </location>
</feature>
<feature type="topological domain" description="Cytoplasmic" evidence="6">
    <location>
        <begin position="89"/>
        <end position="112"/>
    </location>
</feature>
<feature type="transmembrane region" description="Helical" evidence="1">
    <location>
        <begin position="113"/>
        <end position="133"/>
    </location>
</feature>
<feature type="topological domain" description="Periplasmic" evidence="6">
    <location>
        <begin position="134"/>
        <end position="149"/>
    </location>
</feature>
<feature type="transmembrane region" description="Helical" evidence="1">
    <location>
        <begin position="150"/>
        <end position="170"/>
    </location>
</feature>
<feature type="topological domain" description="Cytoplasmic" evidence="6">
    <location>
        <begin position="171"/>
        <end position="227"/>
    </location>
</feature>
<accession>O07837</accession>
<organism>
    <name type="scientific">Rhodobacter capsulatus</name>
    <name type="common">Rhodopseudomonas capsulata</name>
    <dbReference type="NCBI Taxonomy" id="1061"/>
    <lineage>
        <taxon>Bacteria</taxon>
        <taxon>Pseudomonadati</taxon>
        <taxon>Pseudomonadota</taxon>
        <taxon>Alphaproteobacteria</taxon>
        <taxon>Rhodobacterales</taxon>
        <taxon>Rhodobacter group</taxon>
        <taxon>Rhodobacter</taxon>
    </lineage>
</organism>
<reference key="1">
    <citation type="journal article" date="1997" name="J. Bacteriol.">
        <title>TRAP transporters: a new family of periplasmic solute transport systems encoded by the dctPQM genes of Rhodobacter capsulatus and by homologs in diverse gram-negative bacteria.</title>
        <authorList>
            <person name="Forward J.A."/>
            <person name="Behrendt M.C."/>
            <person name="Wyborn N.R."/>
            <person name="Cross R."/>
            <person name="Kelly D.J."/>
        </authorList>
    </citation>
    <scope>NUCLEOTIDE SEQUENCE [GENOMIC DNA]</scope>
    <scope>FUNCTION</scope>
    <scope>SUBUNIT</scope>
    <scope>SUBCELLULAR LOCATION</scope>
    <scope>DISRUPTION PHENOTYPE</scope>
    <scope>NOMENCLATURE</scope>
    <source>
        <strain>ATCC 33303 / B10</strain>
    </source>
</reference>
<reference key="2">
    <citation type="journal article" date="2001" name="FEMS Microbiol. Lett.">
        <title>Topological analysis of DctQ, the small integral membrane protein of the C4-dicarboxylate TRAP transporter of Rhodobacter capsulatus.</title>
        <authorList>
            <person name="Wyborn N.R."/>
            <person name="Alderson J."/>
            <person name="Andrews S.C."/>
            <person name="Kelly D.J."/>
        </authorList>
    </citation>
    <scope>SUBCELLULAR LOCATION</scope>
    <scope>TOPOLOGY</scope>
</reference>
<dbReference type="EMBL" id="X63974">
    <property type="protein sequence ID" value="CAA45386.1"/>
    <property type="molecule type" value="Genomic_DNA"/>
</dbReference>
<dbReference type="RefSeq" id="WP_013068720.1">
    <property type="nucleotide sequence ID" value="NZ_VIBE01000005.1"/>
</dbReference>
<dbReference type="TCDB" id="2.A.56.1.1">
    <property type="family name" value="the tripartite atp-independent periplasmic transporter (trap-t) family"/>
</dbReference>
<dbReference type="OMA" id="MHLIDEA"/>
<dbReference type="GO" id="GO:0005886">
    <property type="term" value="C:plasma membrane"/>
    <property type="evidence" value="ECO:0007669"/>
    <property type="project" value="UniProtKB-SubCell"/>
</dbReference>
<dbReference type="GO" id="GO:0022857">
    <property type="term" value="F:transmembrane transporter activity"/>
    <property type="evidence" value="ECO:0007669"/>
    <property type="project" value="TreeGrafter"/>
</dbReference>
<dbReference type="GO" id="GO:0015740">
    <property type="term" value="P:C4-dicarboxylate transport"/>
    <property type="evidence" value="ECO:0007669"/>
    <property type="project" value="TreeGrafter"/>
</dbReference>
<dbReference type="InterPro" id="IPR055348">
    <property type="entry name" value="DctQ"/>
</dbReference>
<dbReference type="InterPro" id="IPR007387">
    <property type="entry name" value="TRAP_DctQ"/>
</dbReference>
<dbReference type="PANTHER" id="PTHR35011">
    <property type="entry name" value="2,3-DIKETO-L-GULONATE TRAP TRANSPORTER SMALL PERMEASE PROTEIN YIAM"/>
    <property type="match status" value="1"/>
</dbReference>
<dbReference type="PANTHER" id="PTHR35011:SF2">
    <property type="entry name" value="2,3-DIKETO-L-GULONATE TRAP TRANSPORTER SMALL PERMEASE PROTEIN YIAM"/>
    <property type="match status" value="1"/>
</dbReference>
<dbReference type="Pfam" id="PF04290">
    <property type="entry name" value="DctQ"/>
    <property type="match status" value="1"/>
</dbReference>
<proteinExistence type="evidence at protein level"/>
<evidence type="ECO:0000255" key="1"/>
<evidence type="ECO:0000269" key="2">
    <source>
    </source>
</evidence>
<evidence type="ECO:0000269" key="3">
    <source>
    </source>
</evidence>
<evidence type="ECO:0000303" key="4">
    <source>
    </source>
</evidence>
<evidence type="ECO:0000305" key="5"/>
<evidence type="ECO:0000305" key="6">
    <source>
    </source>
</evidence>
<sequence length="227" mass="24763">MLRILDRAEEVLIAALIATATVLIFVSVTHRFTLGFVADFVGFFRGHGMTGAAAAAKSLYTTLRGINLVWAQELCIILFVWMAKFGAAYGVRTGIHVGIDVLINRLDAPKRRFFILLGLGAGALFTGIIATLGANFVLHMYHASSTSPDLELPMWLVYLAIPMGSSLMCFRFLQVAFGFARTGELPHHDHGHVDGVDTENEGIDAEGDVLLHSPLTPRDLVEKPKDN</sequence>
<name>DCTQ_RHOCA</name>